<feature type="chain" id="PRO_0000158124" description="Imidazoleglycerol-phosphate dehydratase">
    <location>
        <begin position="1"/>
        <end position="197"/>
    </location>
</feature>
<name>HIS7_CLOAB</name>
<sequence length="197" mass="21948">MEEKRTAFIERKTTETSIEVDINLDGEGKYDIDTGIGFFDHMLELMSKHGLIDLKVKVIGDLKVDSHHTVEDTGIVIGECINKALGNKKSINRYGTSFVPMDESLCQVSMDISGRAFLVFDGEFTCEKLGDFQTEMVEEFFRALAFNAGITLHARVIYGKNNHHMIEGLFKAFGRALSEAVSKNTRIKGVMSTKGSI</sequence>
<gene>
    <name evidence="1" type="primary">hisB</name>
    <name type="ordered locus">CA_C0938</name>
</gene>
<accession>Q97KI1</accession>
<reference key="1">
    <citation type="journal article" date="2001" name="J. Bacteriol.">
        <title>Genome sequence and comparative analysis of the solvent-producing bacterium Clostridium acetobutylicum.</title>
        <authorList>
            <person name="Noelling J."/>
            <person name="Breton G."/>
            <person name="Omelchenko M.V."/>
            <person name="Makarova K.S."/>
            <person name="Zeng Q."/>
            <person name="Gibson R."/>
            <person name="Lee H.M."/>
            <person name="Dubois J."/>
            <person name="Qiu D."/>
            <person name="Hitti J."/>
            <person name="Wolf Y.I."/>
            <person name="Tatusov R.L."/>
            <person name="Sabathe F."/>
            <person name="Doucette-Stamm L.A."/>
            <person name="Soucaille P."/>
            <person name="Daly M.J."/>
            <person name="Bennett G.N."/>
            <person name="Koonin E.V."/>
            <person name="Smith D.R."/>
        </authorList>
    </citation>
    <scope>NUCLEOTIDE SEQUENCE [LARGE SCALE GENOMIC DNA]</scope>
    <source>
        <strain>ATCC 824 / DSM 792 / JCM 1419 / IAM 19013 / LMG 5710 / NBRC 13948 / NRRL B-527 / VKM B-1787 / 2291 / W</strain>
    </source>
</reference>
<comment type="catalytic activity">
    <reaction evidence="1">
        <text>D-erythro-1-(imidazol-4-yl)glycerol 3-phosphate = 3-(imidazol-4-yl)-2-oxopropyl phosphate + H2O</text>
        <dbReference type="Rhea" id="RHEA:11040"/>
        <dbReference type="ChEBI" id="CHEBI:15377"/>
        <dbReference type="ChEBI" id="CHEBI:57766"/>
        <dbReference type="ChEBI" id="CHEBI:58278"/>
        <dbReference type="EC" id="4.2.1.19"/>
    </reaction>
</comment>
<comment type="pathway">
    <text evidence="1">Amino-acid biosynthesis; L-histidine biosynthesis; L-histidine from 5-phospho-alpha-D-ribose 1-diphosphate: step 6/9.</text>
</comment>
<comment type="subcellular location">
    <subcellularLocation>
        <location evidence="1">Cytoplasm</location>
    </subcellularLocation>
</comment>
<comment type="similarity">
    <text evidence="1">Belongs to the imidazoleglycerol-phosphate dehydratase family.</text>
</comment>
<proteinExistence type="inferred from homology"/>
<evidence type="ECO:0000255" key="1">
    <source>
        <dbReference type="HAMAP-Rule" id="MF_00076"/>
    </source>
</evidence>
<dbReference type="EC" id="4.2.1.19" evidence="1"/>
<dbReference type="EMBL" id="AE001437">
    <property type="protein sequence ID" value="AAK78914.1"/>
    <property type="molecule type" value="Genomic_DNA"/>
</dbReference>
<dbReference type="PIR" id="G97015">
    <property type="entry name" value="G97015"/>
</dbReference>
<dbReference type="RefSeq" id="NP_347574.1">
    <property type="nucleotide sequence ID" value="NC_003030.1"/>
</dbReference>
<dbReference type="RefSeq" id="WP_010964256.1">
    <property type="nucleotide sequence ID" value="NC_003030.1"/>
</dbReference>
<dbReference type="SMR" id="Q97KI1"/>
<dbReference type="STRING" id="272562.CA_C0938"/>
<dbReference type="GeneID" id="44997448"/>
<dbReference type="KEGG" id="cac:CA_C0938"/>
<dbReference type="PATRIC" id="fig|272562.8.peg.1148"/>
<dbReference type="eggNOG" id="COG0131">
    <property type="taxonomic scope" value="Bacteria"/>
</dbReference>
<dbReference type="HOGENOM" id="CLU_044308_3_0_9"/>
<dbReference type="OrthoDB" id="9790411at2"/>
<dbReference type="UniPathway" id="UPA00031">
    <property type="reaction ID" value="UER00011"/>
</dbReference>
<dbReference type="Proteomes" id="UP000000814">
    <property type="component" value="Chromosome"/>
</dbReference>
<dbReference type="GO" id="GO:0005737">
    <property type="term" value="C:cytoplasm"/>
    <property type="evidence" value="ECO:0007669"/>
    <property type="project" value="UniProtKB-SubCell"/>
</dbReference>
<dbReference type="GO" id="GO:0004424">
    <property type="term" value="F:imidazoleglycerol-phosphate dehydratase activity"/>
    <property type="evidence" value="ECO:0007669"/>
    <property type="project" value="UniProtKB-UniRule"/>
</dbReference>
<dbReference type="GO" id="GO:0000105">
    <property type="term" value="P:L-histidine biosynthetic process"/>
    <property type="evidence" value="ECO:0007669"/>
    <property type="project" value="UniProtKB-UniRule"/>
</dbReference>
<dbReference type="CDD" id="cd07914">
    <property type="entry name" value="IGPD"/>
    <property type="match status" value="1"/>
</dbReference>
<dbReference type="FunFam" id="3.30.230.40:FF:000001">
    <property type="entry name" value="Imidazoleglycerol-phosphate dehydratase HisB"/>
    <property type="match status" value="1"/>
</dbReference>
<dbReference type="FunFam" id="3.30.230.40:FF:000003">
    <property type="entry name" value="Imidazoleglycerol-phosphate dehydratase HisB"/>
    <property type="match status" value="1"/>
</dbReference>
<dbReference type="Gene3D" id="3.30.230.40">
    <property type="entry name" value="Imidazole glycerol phosphate dehydratase, domain 1"/>
    <property type="match status" value="2"/>
</dbReference>
<dbReference type="HAMAP" id="MF_00076">
    <property type="entry name" value="HisB"/>
    <property type="match status" value="1"/>
</dbReference>
<dbReference type="InterPro" id="IPR038494">
    <property type="entry name" value="IGPD_sf"/>
</dbReference>
<dbReference type="InterPro" id="IPR000807">
    <property type="entry name" value="ImidazoleglycerolP_deHydtase"/>
</dbReference>
<dbReference type="InterPro" id="IPR020565">
    <property type="entry name" value="ImidazoleglycerP_deHydtase_CS"/>
</dbReference>
<dbReference type="InterPro" id="IPR020568">
    <property type="entry name" value="Ribosomal_Su5_D2-typ_SF"/>
</dbReference>
<dbReference type="NCBIfam" id="NF002107">
    <property type="entry name" value="PRK00951.1-2"/>
    <property type="match status" value="1"/>
</dbReference>
<dbReference type="NCBIfam" id="NF002111">
    <property type="entry name" value="PRK00951.2-1"/>
    <property type="match status" value="1"/>
</dbReference>
<dbReference type="NCBIfam" id="NF002112">
    <property type="entry name" value="PRK00951.2-2"/>
    <property type="match status" value="1"/>
</dbReference>
<dbReference type="NCBIfam" id="NF002114">
    <property type="entry name" value="PRK00951.2-4"/>
    <property type="match status" value="1"/>
</dbReference>
<dbReference type="PANTHER" id="PTHR23133:SF2">
    <property type="entry name" value="IMIDAZOLEGLYCEROL-PHOSPHATE DEHYDRATASE"/>
    <property type="match status" value="1"/>
</dbReference>
<dbReference type="PANTHER" id="PTHR23133">
    <property type="entry name" value="IMIDAZOLEGLYCEROL-PHOSPHATE DEHYDRATASE HIS7"/>
    <property type="match status" value="1"/>
</dbReference>
<dbReference type="Pfam" id="PF00475">
    <property type="entry name" value="IGPD"/>
    <property type="match status" value="1"/>
</dbReference>
<dbReference type="SUPFAM" id="SSF54211">
    <property type="entry name" value="Ribosomal protein S5 domain 2-like"/>
    <property type="match status" value="2"/>
</dbReference>
<dbReference type="PROSITE" id="PS00954">
    <property type="entry name" value="IGP_DEHYDRATASE_1"/>
    <property type="match status" value="1"/>
</dbReference>
<dbReference type="PROSITE" id="PS00955">
    <property type="entry name" value="IGP_DEHYDRATASE_2"/>
    <property type="match status" value="1"/>
</dbReference>
<organism>
    <name type="scientific">Clostridium acetobutylicum (strain ATCC 824 / DSM 792 / JCM 1419 / IAM 19013 / LMG 5710 / NBRC 13948 / NRRL B-527 / VKM B-1787 / 2291 / W)</name>
    <dbReference type="NCBI Taxonomy" id="272562"/>
    <lineage>
        <taxon>Bacteria</taxon>
        <taxon>Bacillati</taxon>
        <taxon>Bacillota</taxon>
        <taxon>Clostridia</taxon>
        <taxon>Eubacteriales</taxon>
        <taxon>Clostridiaceae</taxon>
        <taxon>Clostridium</taxon>
    </lineage>
</organism>
<protein>
    <recommendedName>
        <fullName evidence="1">Imidazoleglycerol-phosphate dehydratase</fullName>
        <shortName evidence="1">IGPD</shortName>
        <ecNumber evidence="1">4.2.1.19</ecNumber>
    </recommendedName>
</protein>
<keyword id="KW-0028">Amino-acid biosynthesis</keyword>
<keyword id="KW-0963">Cytoplasm</keyword>
<keyword id="KW-0368">Histidine biosynthesis</keyword>
<keyword id="KW-0456">Lyase</keyword>
<keyword id="KW-1185">Reference proteome</keyword>